<name>MURA1_STAAN</name>
<gene>
    <name evidence="1" type="primary">murA1</name>
    <name type="synonym">murA</name>
    <name type="ordered locus">SA1902</name>
</gene>
<organism>
    <name type="scientific">Staphylococcus aureus (strain N315)</name>
    <dbReference type="NCBI Taxonomy" id="158879"/>
    <lineage>
        <taxon>Bacteria</taxon>
        <taxon>Bacillati</taxon>
        <taxon>Bacillota</taxon>
        <taxon>Bacilli</taxon>
        <taxon>Bacillales</taxon>
        <taxon>Staphylococcaceae</taxon>
        <taxon>Staphylococcus</taxon>
    </lineage>
</organism>
<keyword id="KW-0131">Cell cycle</keyword>
<keyword id="KW-0132">Cell division</keyword>
<keyword id="KW-0133">Cell shape</keyword>
<keyword id="KW-0961">Cell wall biogenesis/degradation</keyword>
<keyword id="KW-0963">Cytoplasm</keyword>
<keyword id="KW-0573">Peptidoglycan synthesis</keyword>
<keyword id="KW-0670">Pyruvate</keyword>
<keyword id="KW-0808">Transferase</keyword>
<sequence>MDKIVIKGGNKLTGEVKVEGAKNAVLPILTASLLASDKPSKLVNVPALSDVETINNVLTTLNADVTYKKDENAVVVDATKTLNEEAPYEYVSKMRASILVMGPLLARLGHAIVALPGGCAIGSRPIEQHIKGFEALGAEIHLENGNIYANAKDGLKGTSIHLDFPSVGATQNIIMAASLAKGKTLIENAAKEPEIVDLANYINEMGGRITGAGTDTITINGVESLHGVEHAIIPDRIEAGTLLIAGAITRGDIFVRGAIKEHMASLVYKLEEMGVELDYQEDGIRVRAEGELQPVDIKTLPHPGFPTDMQSQMMALLLTANGHKVVTETVFENRFMHVAEFKRMNANINVEGRSAKLEGKSQLQGAQVKATDLRAAAALILAGLVADGKTSVTELTHLDRGYVDLHGKLKQLGADIERIND</sequence>
<feature type="chain" id="PRO_0000178918" description="UDP-N-acetylglucosamine 1-carboxyvinyltransferase 1">
    <location>
        <begin position="1"/>
        <end position="421"/>
    </location>
</feature>
<feature type="active site" description="Proton donor" evidence="1">
    <location>
        <position position="119"/>
    </location>
</feature>
<feature type="binding site" evidence="1">
    <location>
        <begin position="22"/>
        <end position="23"/>
    </location>
    <ligand>
        <name>phosphoenolpyruvate</name>
        <dbReference type="ChEBI" id="CHEBI:58702"/>
    </ligand>
</feature>
<feature type="binding site" evidence="1">
    <location>
        <position position="95"/>
    </location>
    <ligand>
        <name>UDP-N-acetyl-alpha-D-glucosamine</name>
        <dbReference type="ChEBI" id="CHEBI:57705"/>
    </ligand>
</feature>
<feature type="binding site" evidence="1">
    <location>
        <begin position="124"/>
        <end position="128"/>
    </location>
    <ligand>
        <name>UDP-N-acetyl-alpha-D-glucosamine</name>
        <dbReference type="ChEBI" id="CHEBI:57705"/>
    </ligand>
</feature>
<feature type="binding site" evidence="1">
    <location>
        <position position="308"/>
    </location>
    <ligand>
        <name>UDP-N-acetyl-alpha-D-glucosamine</name>
        <dbReference type="ChEBI" id="CHEBI:57705"/>
    </ligand>
</feature>
<feature type="binding site" evidence="1">
    <location>
        <position position="330"/>
    </location>
    <ligand>
        <name>UDP-N-acetyl-alpha-D-glucosamine</name>
        <dbReference type="ChEBI" id="CHEBI:57705"/>
    </ligand>
</feature>
<feature type="modified residue" description="2-(S-cysteinyl)pyruvic acid O-phosphothioketal" evidence="1">
    <location>
        <position position="119"/>
    </location>
</feature>
<evidence type="ECO:0000255" key="1">
    <source>
        <dbReference type="HAMAP-Rule" id="MF_00111"/>
    </source>
</evidence>
<accession>P84058</accession>
<accession>Q931H4</accession>
<accession>Q99SF8</accession>
<comment type="function">
    <text evidence="1">Cell wall formation. Adds enolpyruvyl to UDP-N-acetylglucosamine.</text>
</comment>
<comment type="catalytic activity">
    <reaction evidence="1">
        <text>phosphoenolpyruvate + UDP-N-acetyl-alpha-D-glucosamine = UDP-N-acetyl-3-O-(1-carboxyvinyl)-alpha-D-glucosamine + phosphate</text>
        <dbReference type="Rhea" id="RHEA:18681"/>
        <dbReference type="ChEBI" id="CHEBI:43474"/>
        <dbReference type="ChEBI" id="CHEBI:57705"/>
        <dbReference type="ChEBI" id="CHEBI:58702"/>
        <dbReference type="ChEBI" id="CHEBI:68483"/>
        <dbReference type="EC" id="2.5.1.7"/>
    </reaction>
</comment>
<comment type="pathway">
    <text evidence="1">Cell wall biogenesis; peptidoglycan biosynthesis.</text>
</comment>
<comment type="subcellular location">
    <subcellularLocation>
        <location evidence="1">Cytoplasm</location>
    </subcellularLocation>
</comment>
<comment type="similarity">
    <text evidence="1">Belongs to the EPSP synthase family. MurA subfamily.</text>
</comment>
<reference key="1">
    <citation type="journal article" date="2001" name="Lancet">
        <title>Whole genome sequencing of meticillin-resistant Staphylococcus aureus.</title>
        <authorList>
            <person name="Kuroda M."/>
            <person name="Ohta T."/>
            <person name="Uchiyama I."/>
            <person name="Baba T."/>
            <person name="Yuzawa H."/>
            <person name="Kobayashi I."/>
            <person name="Cui L."/>
            <person name="Oguchi A."/>
            <person name="Aoki K."/>
            <person name="Nagai Y."/>
            <person name="Lian J.-Q."/>
            <person name="Ito T."/>
            <person name="Kanamori M."/>
            <person name="Matsumaru H."/>
            <person name="Maruyama A."/>
            <person name="Murakami H."/>
            <person name="Hosoyama A."/>
            <person name="Mizutani-Ui Y."/>
            <person name="Takahashi N.K."/>
            <person name="Sawano T."/>
            <person name="Inoue R."/>
            <person name="Kaito C."/>
            <person name="Sekimizu K."/>
            <person name="Hirakawa H."/>
            <person name="Kuhara S."/>
            <person name="Goto S."/>
            <person name="Yabuzaki J."/>
            <person name="Kanehisa M."/>
            <person name="Yamashita A."/>
            <person name="Oshima K."/>
            <person name="Furuya K."/>
            <person name="Yoshino C."/>
            <person name="Shiba T."/>
            <person name="Hattori M."/>
            <person name="Ogasawara N."/>
            <person name="Hayashi H."/>
            <person name="Hiramatsu K."/>
        </authorList>
    </citation>
    <scope>NUCLEOTIDE SEQUENCE [LARGE SCALE GENOMIC DNA]</scope>
    <source>
        <strain>N315</strain>
    </source>
</reference>
<reference key="2">
    <citation type="submission" date="2007-10" db="UniProtKB">
        <title>Shotgun proteomic analysis of total and membrane protein extracts of S. aureus strain N315.</title>
        <authorList>
            <person name="Vaezzadeh A.R."/>
            <person name="Deshusses J."/>
            <person name="Lescuyer P."/>
            <person name="Hochstrasser D.F."/>
        </authorList>
    </citation>
    <scope>IDENTIFICATION BY MASS SPECTROMETRY [LARGE SCALE ANALYSIS]</scope>
    <source>
        <strain>N315</strain>
    </source>
</reference>
<protein>
    <recommendedName>
        <fullName evidence="1">UDP-N-acetylglucosamine 1-carboxyvinyltransferase 1</fullName>
        <ecNumber evidence="1">2.5.1.7</ecNumber>
    </recommendedName>
    <alternativeName>
        <fullName evidence="1">Enoylpyruvate transferase 1</fullName>
    </alternativeName>
    <alternativeName>
        <fullName evidence="1">UDP-N-acetylglucosamine enolpyruvyl transferase 1</fullName>
        <shortName evidence="1">EPT 1</shortName>
    </alternativeName>
</protein>
<proteinExistence type="evidence at protein level"/>
<dbReference type="EC" id="2.5.1.7" evidence="1"/>
<dbReference type="EMBL" id="BA000018">
    <property type="protein sequence ID" value="BAB43186.1"/>
    <property type="molecule type" value="Genomic_DNA"/>
</dbReference>
<dbReference type="PIR" id="A90003">
    <property type="entry name" value="A90003"/>
</dbReference>
<dbReference type="RefSeq" id="WP_000358006.1">
    <property type="nucleotide sequence ID" value="NC_002745.2"/>
</dbReference>
<dbReference type="SMR" id="P84058"/>
<dbReference type="BindingDB" id="P84058"/>
<dbReference type="ChEMBL" id="CHEMBL4541"/>
<dbReference type="EnsemblBacteria" id="BAB43186">
    <property type="protein sequence ID" value="BAB43186"/>
    <property type="gene ID" value="BAB43186"/>
</dbReference>
<dbReference type="KEGG" id="sau:SA1902"/>
<dbReference type="HOGENOM" id="CLU_027387_0_0_9"/>
<dbReference type="BioCyc" id="MetaCyc:MONOMER-15460"/>
<dbReference type="UniPathway" id="UPA00219"/>
<dbReference type="GO" id="GO:0005737">
    <property type="term" value="C:cytoplasm"/>
    <property type="evidence" value="ECO:0007669"/>
    <property type="project" value="UniProtKB-SubCell"/>
</dbReference>
<dbReference type="GO" id="GO:0008760">
    <property type="term" value="F:UDP-N-acetylglucosamine 1-carboxyvinyltransferase activity"/>
    <property type="evidence" value="ECO:0007669"/>
    <property type="project" value="UniProtKB-UniRule"/>
</dbReference>
<dbReference type="GO" id="GO:0051301">
    <property type="term" value="P:cell division"/>
    <property type="evidence" value="ECO:0007669"/>
    <property type="project" value="UniProtKB-KW"/>
</dbReference>
<dbReference type="GO" id="GO:0071555">
    <property type="term" value="P:cell wall organization"/>
    <property type="evidence" value="ECO:0007669"/>
    <property type="project" value="UniProtKB-KW"/>
</dbReference>
<dbReference type="GO" id="GO:0009252">
    <property type="term" value="P:peptidoglycan biosynthetic process"/>
    <property type="evidence" value="ECO:0007669"/>
    <property type="project" value="UniProtKB-UniRule"/>
</dbReference>
<dbReference type="GO" id="GO:0008360">
    <property type="term" value="P:regulation of cell shape"/>
    <property type="evidence" value="ECO:0007669"/>
    <property type="project" value="UniProtKB-KW"/>
</dbReference>
<dbReference type="GO" id="GO:0019277">
    <property type="term" value="P:UDP-N-acetylgalactosamine biosynthetic process"/>
    <property type="evidence" value="ECO:0007669"/>
    <property type="project" value="InterPro"/>
</dbReference>
<dbReference type="CDD" id="cd01555">
    <property type="entry name" value="UdpNAET"/>
    <property type="match status" value="1"/>
</dbReference>
<dbReference type="FunFam" id="3.65.10.10:FF:000001">
    <property type="entry name" value="UDP-N-acetylglucosamine 1-carboxyvinyltransferase"/>
    <property type="match status" value="1"/>
</dbReference>
<dbReference type="Gene3D" id="3.65.10.10">
    <property type="entry name" value="Enolpyruvate transferase domain"/>
    <property type="match status" value="2"/>
</dbReference>
<dbReference type="HAMAP" id="MF_00111">
    <property type="entry name" value="MurA"/>
    <property type="match status" value="1"/>
</dbReference>
<dbReference type="InterPro" id="IPR001986">
    <property type="entry name" value="Enolpyruvate_Tfrase_dom"/>
</dbReference>
<dbReference type="InterPro" id="IPR036968">
    <property type="entry name" value="Enolpyruvate_Tfrase_sf"/>
</dbReference>
<dbReference type="InterPro" id="IPR050068">
    <property type="entry name" value="MurA_subfamily"/>
</dbReference>
<dbReference type="InterPro" id="IPR013792">
    <property type="entry name" value="RNA3'P_cycl/enolpyr_Trfase_a/b"/>
</dbReference>
<dbReference type="InterPro" id="IPR005750">
    <property type="entry name" value="UDP_GlcNAc_COvinyl_MurA"/>
</dbReference>
<dbReference type="NCBIfam" id="TIGR01072">
    <property type="entry name" value="murA"/>
    <property type="match status" value="1"/>
</dbReference>
<dbReference type="NCBIfam" id="NF006873">
    <property type="entry name" value="PRK09369.1"/>
    <property type="match status" value="1"/>
</dbReference>
<dbReference type="PANTHER" id="PTHR43783">
    <property type="entry name" value="UDP-N-ACETYLGLUCOSAMINE 1-CARBOXYVINYLTRANSFERASE"/>
    <property type="match status" value="1"/>
</dbReference>
<dbReference type="PANTHER" id="PTHR43783:SF1">
    <property type="entry name" value="UDP-N-ACETYLGLUCOSAMINE 1-CARBOXYVINYLTRANSFERASE"/>
    <property type="match status" value="1"/>
</dbReference>
<dbReference type="Pfam" id="PF00275">
    <property type="entry name" value="EPSP_synthase"/>
    <property type="match status" value="1"/>
</dbReference>
<dbReference type="SUPFAM" id="SSF55205">
    <property type="entry name" value="EPT/RTPC-like"/>
    <property type="match status" value="1"/>
</dbReference>